<evidence type="ECO:0000255" key="1">
    <source>
        <dbReference type="HAMAP-Rule" id="MF_00123"/>
    </source>
</evidence>
<keyword id="KW-0030">Aminoacyl-tRNA synthetase</keyword>
<keyword id="KW-0067">ATP-binding</keyword>
<keyword id="KW-0963">Cytoplasm</keyword>
<keyword id="KW-0436">Ligase</keyword>
<keyword id="KW-0547">Nucleotide-binding</keyword>
<keyword id="KW-0648">Protein biosynthesis</keyword>
<keyword id="KW-1185">Reference proteome</keyword>
<comment type="catalytic activity">
    <reaction evidence="1">
        <text>tRNA(Arg) + L-arginine + ATP = L-arginyl-tRNA(Arg) + AMP + diphosphate</text>
        <dbReference type="Rhea" id="RHEA:20301"/>
        <dbReference type="Rhea" id="RHEA-COMP:9658"/>
        <dbReference type="Rhea" id="RHEA-COMP:9673"/>
        <dbReference type="ChEBI" id="CHEBI:30616"/>
        <dbReference type="ChEBI" id="CHEBI:32682"/>
        <dbReference type="ChEBI" id="CHEBI:33019"/>
        <dbReference type="ChEBI" id="CHEBI:78442"/>
        <dbReference type="ChEBI" id="CHEBI:78513"/>
        <dbReference type="ChEBI" id="CHEBI:456215"/>
        <dbReference type="EC" id="6.1.1.19"/>
    </reaction>
</comment>
<comment type="subunit">
    <text evidence="1">Monomer.</text>
</comment>
<comment type="subcellular location">
    <subcellularLocation>
        <location evidence="1">Cytoplasm</location>
    </subcellularLocation>
</comment>
<comment type="similarity">
    <text evidence="1">Belongs to the class-I aminoacyl-tRNA synthetase family.</text>
</comment>
<proteinExistence type="inferred from homology"/>
<protein>
    <recommendedName>
        <fullName evidence="1">Arginine--tRNA ligase</fullName>
        <ecNumber evidence="1">6.1.1.19</ecNumber>
    </recommendedName>
    <alternativeName>
        <fullName evidence="1">Arginyl-tRNA synthetase</fullName>
        <shortName evidence="1">ArgRS</shortName>
    </alternativeName>
</protein>
<gene>
    <name evidence="1" type="primary">argS</name>
    <name type="ordered locus">VF_0839</name>
</gene>
<name>SYR_ALIF1</name>
<sequence>MNIQSLINDKVSQALEAAGAPAGSPAAVRQSAKAQFGDYQANGVMGVAKRLGTNPREFAQKVLDVLDLDGIASKTEIAGPGFINIFLSEEFLAKQAEAALADERLGVAKEEQQNIVADYSAPNVAKEMHVGHLRSTIIGDAVVRTLEFLGHNVTRANHIGDWGTQFGMLIANLERIQKEKGEVSMELSDLEGFYRESKKLYDEDEEFAVTARGYVVKLQSGDEFCAEMWKKLVDVTMVQNQRNYDRLNVSLTRDNVMGESMYNSMLAPIVADLQKQGLAVESEGAQVVFLDEYKNKDGEPMGVIVQKRDGGFLYTTTDIACAKYRYEELNADRVLYFIDSRQHQHLMQAWTIVRKAGYVPESVSLEHHAFGMMLGKDGRPFKTRAGGTVRLADLLDEAEERATKLIEEKNKDLSAEEKAKIATTVAMAAVKYSDLSKHRTTDYIFDWDNMLAFEGNTAPYMQYAYTRVASIFSKAGLSMDELTGEVKITDEKEKALVAKLMQFEEAVQAVASEGQPHLMCAYLFELAGQFSSFYEACPILNNEDDAVKQSRLKLAALTAKTIKQGLELLGIETLERM</sequence>
<dbReference type="EC" id="6.1.1.19" evidence="1"/>
<dbReference type="EMBL" id="CP000020">
    <property type="protein sequence ID" value="AAW85334.1"/>
    <property type="molecule type" value="Genomic_DNA"/>
</dbReference>
<dbReference type="RefSeq" id="WP_011261509.1">
    <property type="nucleotide sequence ID" value="NC_006840.2"/>
</dbReference>
<dbReference type="RefSeq" id="YP_204222.1">
    <property type="nucleotide sequence ID" value="NC_006840.2"/>
</dbReference>
<dbReference type="SMR" id="Q5E6L2"/>
<dbReference type="STRING" id="312309.VF_0839"/>
<dbReference type="EnsemblBacteria" id="AAW85334">
    <property type="protein sequence ID" value="AAW85334"/>
    <property type="gene ID" value="VF_0839"/>
</dbReference>
<dbReference type="GeneID" id="54163507"/>
<dbReference type="KEGG" id="vfi:VF_0839"/>
<dbReference type="PATRIC" id="fig|312309.11.peg.832"/>
<dbReference type="eggNOG" id="COG0018">
    <property type="taxonomic scope" value="Bacteria"/>
</dbReference>
<dbReference type="HOGENOM" id="CLU_006406_5_1_6"/>
<dbReference type="OrthoDB" id="9803211at2"/>
<dbReference type="Proteomes" id="UP000000537">
    <property type="component" value="Chromosome I"/>
</dbReference>
<dbReference type="GO" id="GO:0005737">
    <property type="term" value="C:cytoplasm"/>
    <property type="evidence" value="ECO:0007669"/>
    <property type="project" value="UniProtKB-SubCell"/>
</dbReference>
<dbReference type="GO" id="GO:0004814">
    <property type="term" value="F:arginine-tRNA ligase activity"/>
    <property type="evidence" value="ECO:0007669"/>
    <property type="project" value="UniProtKB-UniRule"/>
</dbReference>
<dbReference type="GO" id="GO:0005524">
    <property type="term" value="F:ATP binding"/>
    <property type="evidence" value="ECO:0007669"/>
    <property type="project" value="UniProtKB-UniRule"/>
</dbReference>
<dbReference type="GO" id="GO:0006420">
    <property type="term" value="P:arginyl-tRNA aminoacylation"/>
    <property type="evidence" value="ECO:0007669"/>
    <property type="project" value="UniProtKB-UniRule"/>
</dbReference>
<dbReference type="CDD" id="cd07956">
    <property type="entry name" value="Anticodon_Ia_Arg"/>
    <property type="match status" value="1"/>
</dbReference>
<dbReference type="CDD" id="cd00671">
    <property type="entry name" value="ArgRS_core"/>
    <property type="match status" value="1"/>
</dbReference>
<dbReference type="FunFam" id="1.10.730.10:FF:000001">
    <property type="entry name" value="Arginine--tRNA ligase"/>
    <property type="match status" value="1"/>
</dbReference>
<dbReference type="FunFam" id="3.40.50.620:FF:000030">
    <property type="entry name" value="Arginine--tRNA ligase"/>
    <property type="match status" value="1"/>
</dbReference>
<dbReference type="Gene3D" id="3.30.1360.70">
    <property type="entry name" value="Arginyl tRNA synthetase N-terminal domain"/>
    <property type="match status" value="1"/>
</dbReference>
<dbReference type="Gene3D" id="3.40.50.620">
    <property type="entry name" value="HUPs"/>
    <property type="match status" value="1"/>
</dbReference>
<dbReference type="Gene3D" id="1.10.730.10">
    <property type="entry name" value="Isoleucyl-tRNA Synthetase, Domain 1"/>
    <property type="match status" value="1"/>
</dbReference>
<dbReference type="HAMAP" id="MF_00123">
    <property type="entry name" value="Arg_tRNA_synth"/>
    <property type="match status" value="1"/>
</dbReference>
<dbReference type="InterPro" id="IPR001412">
    <property type="entry name" value="aa-tRNA-synth_I_CS"/>
</dbReference>
<dbReference type="InterPro" id="IPR001278">
    <property type="entry name" value="Arg-tRNA-ligase"/>
</dbReference>
<dbReference type="InterPro" id="IPR005148">
    <property type="entry name" value="Arg-tRNA-synth_N"/>
</dbReference>
<dbReference type="InterPro" id="IPR036695">
    <property type="entry name" value="Arg-tRNA-synth_N_sf"/>
</dbReference>
<dbReference type="InterPro" id="IPR035684">
    <property type="entry name" value="ArgRS_core"/>
</dbReference>
<dbReference type="InterPro" id="IPR008909">
    <property type="entry name" value="DALR_anticod-bd"/>
</dbReference>
<dbReference type="InterPro" id="IPR014729">
    <property type="entry name" value="Rossmann-like_a/b/a_fold"/>
</dbReference>
<dbReference type="InterPro" id="IPR009080">
    <property type="entry name" value="tRNAsynth_Ia_anticodon-bd"/>
</dbReference>
<dbReference type="NCBIfam" id="TIGR00456">
    <property type="entry name" value="argS"/>
    <property type="match status" value="1"/>
</dbReference>
<dbReference type="PANTHER" id="PTHR11956:SF5">
    <property type="entry name" value="ARGININE--TRNA LIGASE, CYTOPLASMIC"/>
    <property type="match status" value="1"/>
</dbReference>
<dbReference type="PANTHER" id="PTHR11956">
    <property type="entry name" value="ARGINYL-TRNA SYNTHETASE"/>
    <property type="match status" value="1"/>
</dbReference>
<dbReference type="Pfam" id="PF03485">
    <property type="entry name" value="Arg_tRNA_synt_N"/>
    <property type="match status" value="1"/>
</dbReference>
<dbReference type="Pfam" id="PF05746">
    <property type="entry name" value="DALR_1"/>
    <property type="match status" value="1"/>
</dbReference>
<dbReference type="Pfam" id="PF00750">
    <property type="entry name" value="tRNA-synt_1d"/>
    <property type="match status" value="1"/>
</dbReference>
<dbReference type="PRINTS" id="PR01038">
    <property type="entry name" value="TRNASYNTHARG"/>
</dbReference>
<dbReference type="SMART" id="SM01016">
    <property type="entry name" value="Arg_tRNA_synt_N"/>
    <property type="match status" value="1"/>
</dbReference>
<dbReference type="SMART" id="SM00836">
    <property type="entry name" value="DALR_1"/>
    <property type="match status" value="1"/>
</dbReference>
<dbReference type="SUPFAM" id="SSF47323">
    <property type="entry name" value="Anticodon-binding domain of a subclass of class I aminoacyl-tRNA synthetases"/>
    <property type="match status" value="1"/>
</dbReference>
<dbReference type="SUPFAM" id="SSF55190">
    <property type="entry name" value="Arginyl-tRNA synthetase (ArgRS), N-terminal 'additional' domain"/>
    <property type="match status" value="1"/>
</dbReference>
<dbReference type="SUPFAM" id="SSF52374">
    <property type="entry name" value="Nucleotidylyl transferase"/>
    <property type="match status" value="1"/>
</dbReference>
<dbReference type="PROSITE" id="PS00178">
    <property type="entry name" value="AA_TRNA_LIGASE_I"/>
    <property type="match status" value="1"/>
</dbReference>
<accession>Q5E6L2</accession>
<feature type="chain" id="PRO_0000242119" description="Arginine--tRNA ligase">
    <location>
        <begin position="1"/>
        <end position="577"/>
    </location>
</feature>
<feature type="short sequence motif" description="'HIGH' region">
    <location>
        <begin position="122"/>
        <end position="132"/>
    </location>
</feature>
<reference key="1">
    <citation type="journal article" date="2005" name="Proc. Natl. Acad. Sci. U.S.A.">
        <title>Complete genome sequence of Vibrio fischeri: a symbiotic bacterium with pathogenic congeners.</title>
        <authorList>
            <person name="Ruby E.G."/>
            <person name="Urbanowski M."/>
            <person name="Campbell J."/>
            <person name="Dunn A."/>
            <person name="Faini M."/>
            <person name="Gunsalus R."/>
            <person name="Lostroh P."/>
            <person name="Lupp C."/>
            <person name="McCann J."/>
            <person name="Millikan D."/>
            <person name="Schaefer A."/>
            <person name="Stabb E."/>
            <person name="Stevens A."/>
            <person name="Visick K."/>
            <person name="Whistler C."/>
            <person name="Greenberg E.P."/>
        </authorList>
    </citation>
    <scope>NUCLEOTIDE SEQUENCE [LARGE SCALE GENOMIC DNA]</scope>
    <source>
        <strain>ATCC 700601 / ES114</strain>
    </source>
</reference>
<organism>
    <name type="scientific">Aliivibrio fischeri (strain ATCC 700601 / ES114)</name>
    <name type="common">Vibrio fischeri</name>
    <dbReference type="NCBI Taxonomy" id="312309"/>
    <lineage>
        <taxon>Bacteria</taxon>
        <taxon>Pseudomonadati</taxon>
        <taxon>Pseudomonadota</taxon>
        <taxon>Gammaproteobacteria</taxon>
        <taxon>Vibrionales</taxon>
        <taxon>Vibrionaceae</taxon>
        <taxon>Aliivibrio</taxon>
    </lineage>
</organism>